<proteinExistence type="predicted"/>
<protein>
    <recommendedName>
        <fullName>Structural protein precursor VP8</fullName>
    </recommendedName>
    <component>
        <recommendedName>
            <fullName>Putative 26 kDa protease</fullName>
        </recommendedName>
    </component>
    <component>
        <recommendedName>
            <fullName>Putative clamp protein VP8</fullName>
        </recommendedName>
    </component>
</protein>
<sequence length="596" mass="67348">MNTKGFAQKIQRTFHLIHQSHYTPPPNKISTHVEIFSELLTYVDYEWQRAAIGASRWVELAAEENEIHIPFNTKDERQVNFLIAIIHVAISLYSNSGVEPFADCDLEKILNGDYESSKFDWNVVFDIVLPNDVRLKEKTLKAAVVEEERVEPRPKRREITLGGQRPLQTRDVRSDSDLIVLSKLEAYDDVVERPRQNNTDIIIHRLGLAKMNPASNSILPAKISRIITEQVFGAGVNVDYIARPTEGFISLSTATYTVASYFERGIANYDINAVLDNIIDKTDQLNTTDTVVELPSIPPEDSSIEVATPSHETFFDINTMIYIIMCCGSITNPMIQRLNGIVTRYNTTNYVVSYPDTDDGRKKALAERAVITVDGKYYKCYNDIKADTDKRRILNPAVIKEVMISLRHYCGSVIHYRERMEATHISQVFCLLMGICYGGLDTKKIRCRWFEWPAVSNVPVTSSYAEFKGSNSGLPPYQCRKFTPRTVMTSFAHWNLWAWMLDLAIDKRMSSDRHLSIMKIYVLNAFSHLVLNSSLENSANILGPFPSFSGYTAFTSTSIVRDVSSCQRLAPFLLRMFSLVDYVAAAASSEASGSGV</sequence>
<organismHost>
    <name type="scientific">Oryza latifolia</name>
    <dbReference type="NCBI Taxonomy" id="4534"/>
</organismHost>
<organismHost>
    <name type="scientific">Oryza nivara</name>
    <name type="common">Indian wild rice</name>
    <name type="synonym">Oryza sativa f. spontanea</name>
    <dbReference type="NCBI Taxonomy" id="4536"/>
</organismHost>
<organismHost>
    <name type="scientific">Oryza rufipogon</name>
    <name type="common">Brownbeard rice</name>
    <name type="synonym">Asian wild rice</name>
    <dbReference type="NCBI Taxonomy" id="4529"/>
</organismHost>
<name>VP8_RRSVT</name>
<evidence type="ECO:0000269" key="1">
    <source>
    </source>
</evidence>
<evidence type="ECO:0000305" key="2"/>
<accession>O09781</accession>
<keyword id="KW-0167">Capsid protein</keyword>
<keyword id="KW-0378">Hydrolase</keyword>
<keyword id="KW-0645">Protease</keyword>
<keyword id="KW-1185">Reference proteome</keyword>
<keyword id="KW-0946">Virion</keyword>
<comment type="function">
    <text evidence="1">120 subunits of the putative clamp protein VP8b appear to stabilize the capsid shell.</text>
</comment>
<comment type="subcellular location">
    <molecule>Putative clamp protein VP8</molecule>
    <subcellularLocation>
        <location evidence="2">Virion</location>
    </subcellularLocation>
</comment>
<reference key="1">
    <citation type="journal article" date="1996" name="Arch. Virol.">
        <title>The M(r) 43K major capsid protein of rice ragged stunt oryzavirus is a post-translationally processed product of a M(r) 67,348 polypeptide encoded by genome segment 8.</title>
        <authorList>
            <person name="Upadhyaya N.M."/>
            <person name="Zinkowsky E."/>
            <person name="Kositratana W."/>
            <person name="Waterhouse P.M."/>
        </authorList>
    </citation>
    <scope>NUCLEOTIDE SEQUENCE [GENOMIC RNA]</scope>
</reference>
<reference key="2">
    <citation type="journal article" date="2002" name="Sheng Wu Hua Xue Yu Sheng Wu Wu Li Xue Bao">
        <title>Self-aggregation of the structural protein encoded by rice ragged stunt Oryzavirus genome segment 8.</title>
        <authorList>
            <person name="Lu H.J."/>
            <person name="Shao C.G."/>
            <person name="Gong Z.X."/>
        </authorList>
    </citation>
    <scope>FUNCTION</scope>
</reference>
<dbReference type="EMBL" id="L46682">
    <property type="protein sequence ID" value="AAB51456.1"/>
    <property type="molecule type" value="Genomic_RNA"/>
</dbReference>
<dbReference type="RefSeq" id="NP_620528.1">
    <property type="nucleotide sequence ID" value="NC_003758.1"/>
</dbReference>
<dbReference type="GeneID" id="991200"/>
<dbReference type="KEGG" id="vg:991200"/>
<dbReference type="Proteomes" id="UP000000348">
    <property type="component" value="Genome"/>
</dbReference>
<dbReference type="GO" id="GO:0019028">
    <property type="term" value="C:viral capsid"/>
    <property type="evidence" value="ECO:0007669"/>
    <property type="project" value="UniProtKB-KW"/>
</dbReference>
<dbReference type="GO" id="GO:0008233">
    <property type="term" value="F:peptidase activity"/>
    <property type="evidence" value="ECO:0007669"/>
    <property type="project" value="UniProtKB-KW"/>
</dbReference>
<dbReference type="GO" id="GO:0006508">
    <property type="term" value="P:proteolysis"/>
    <property type="evidence" value="ECO:0007669"/>
    <property type="project" value="UniProtKB-KW"/>
</dbReference>
<feature type="chain" id="PRO_5000142935" description="Structural protein precursor VP8">
    <location>
        <begin position="1"/>
        <end position="596"/>
    </location>
</feature>
<feature type="chain" id="PRO_0000403639" description="Putative 26 kDa protease">
    <location>
        <begin position="1"/>
        <end position="224"/>
    </location>
</feature>
<feature type="chain" id="PRO_5000142936" description="Putative clamp protein VP8">
    <location>
        <begin position="225"/>
        <end position="596"/>
    </location>
</feature>
<organism>
    <name type="scientific">Rice ragged stunt virus (isolate Thailand)</name>
    <name type="common">RRSV</name>
    <dbReference type="NCBI Taxonomy" id="649603"/>
    <lineage>
        <taxon>Viruses</taxon>
        <taxon>Riboviria</taxon>
        <taxon>Orthornavirae</taxon>
        <taxon>Duplornaviricota</taxon>
        <taxon>Resentoviricetes</taxon>
        <taxon>Reovirales</taxon>
        <taxon>Spinareoviridae</taxon>
        <taxon>Oryzavirus</taxon>
        <taxon>Rice ragged stunt virus</taxon>
    </lineage>
</organism>